<dbReference type="EMBL" id="DQ226511">
    <property type="protein sequence ID" value="ABB21002.1"/>
    <property type="molecule type" value="Genomic_DNA"/>
</dbReference>
<dbReference type="EMBL" id="DQ226511">
    <property type="protein sequence ID" value="ABB21015.1"/>
    <property type="molecule type" value="Genomic_DNA"/>
</dbReference>
<dbReference type="SMR" id="Q09WV9"/>
<dbReference type="GO" id="GO:0009507">
    <property type="term" value="C:chloroplast"/>
    <property type="evidence" value="ECO:0007669"/>
    <property type="project" value="UniProtKB-SubCell"/>
</dbReference>
<dbReference type="GO" id="GO:0015935">
    <property type="term" value="C:small ribosomal subunit"/>
    <property type="evidence" value="ECO:0007669"/>
    <property type="project" value="InterPro"/>
</dbReference>
<dbReference type="GO" id="GO:0019843">
    <property type="term" value="F:rRNA binding"/>
    <property type="evidence" value="ECO:0007669"/>
    <property type="project" value="UniProtKB-UniRule"/>
</dbReference>
<dbReference type="GO" id="GO:0003735">
    <property type="term" value="F:structural constituent of ribosome"/>
    <property type="evidence" value="ECO:0007669"/>
    <property type="project" value="InterPro"/>
</dbReference>
<dbReference type="GO" id="GO:0006412">
    <property type="term" value="P:translation"/>
    <property type="evidence" value="ECO:0007669"/>
    <property type="project" value="UniProtKB-UniRule"/>
</dbReference>
<dbReference type="CDD" id="cd14871">
    <property type="entry name" value="uS7_Chloroplast"/>
    <property type="match status" value="1"/>
</dbReference>
<dbReference type="FunFam" id="1.10.455.10:FF:000001">
    <property type="entry name" value="30S ribosomal protein S7"/>
    <property type="match status" value="1"/>
</dbReference>
<dbReference type="Gene3D" id="1.10.455.10">
    <property type="entry name" value="Ribosomal protein S7 domain"/>
    <property type="match status" value="1"/>
</dbReference>
<dbReference type="HAMAP" id="MF_00480_B">
    <property type="entry name" value="Ribosomal_uS7_B"/>
    <property type="match status" value="1"/>
</dbReference>
<dbReference type="InterPro" id="IPR000235">
    <property type="entry name" value="Ribosomal_uS7"/>
</dbReference>
<dbReference type="InterPro" id="IPR005717">
    <property type="entry name" value="Ribosomal_uS7_bac/org-type"/>
</dbReference>
<dbReference type="InterPro" id="IPR020606">
    <property type="entry name" value="Ribosomal_uS7_CS"/>
</dbReference>
<dbReference type="InterPro" id="IPR023798">
    <property type="entry name" value="Ribosomal_uS7_dom"/>
</dbReference>
<dbReference type="InterPro" id="IPR036823">
    <property type="entry name" value="Ribosomal_uS7_dom_sf"/>
</dbReference>
<dbReference type="NCBIfam" id="TIGR01029">
    <property type="entry name" value="rpsG_bact"/>
    <property type="match status" value="1"/>
</dbReference>
<dbReference type="PANTHER" id="PTHR11205">
    <property type="entry name" value="RIBOSOMAL PROTEIN S7"/>
    <property type="match status" value="1"/>
</dbReference>
<dbReference type="Pfam" id="PF00177">
    <property type="entry name" value="Ribosomal_S7"/>
    <property type="match status" value="1"/>
</dbReference>
<dbReference type="PIRSF" id="PIRSF002122">
    <property type="entry name" value="RPS7p_RPS7a_RPS5e_RPS7o"/>
    <property type="match status" value="1"/>
</dbReference>
<dbReference type="SUPFAM" id="SSF47973">
    <property type="entry name" value="Ribosomal protein S7"/>
    <property type="match status" value="1"/>
</dbReference>
<dbReference type="PROSITE" id="PS00052">
    <property type="entry name" value="RIBOSOMAL_S7"/>
    <property type="match status" value="1"/>
</dbReference>
<gene>
    <name type="primary">rps7-A</name>
    <name type="ordered locus">MoinCp066</name>
</gene>
<gene>
    <name type="primary">rps7-B</name>
    <name type="ordered locus">MoinCp080</name>
</gene>
<comment type="function">
    <text evidence="1">One of the primary rRNA binding proteins, it binds directly to 16S rRNA where it nucleates assembly of the head domain of the 30S subunit.</text>
</comment>
<comment type="subunit">
    <text>Part of the 30S ribosomal subunit.</text>
</comment>
<comment type="subcellular location">
    <subcellularLocation>
        <location>Plastid</location>
        <location>Chloroplast</location>
    </subcellularLocation>
</comment>
<comment type="similarity">
    <text evidence="3">Belongs to the universal ribosomal protein uS7 family.</text>
</comment>
<name>RR7_MORIN</name>
<feature type="chain" id="PRO_0000277045" description="Small ribosomal subunit protein uS7cz/uS7cy">
    <location>
        <begin position="1"/>
        <end position="155"/>
    </location>
</feature>
<geneLocation type="chloroplast"/>
<reference key="1">
    <citation type="submission" date="2005-09" db="EMBL/GenBank/DDBJ databases">
        <title>The chloroplast genome of mulberry: structural features and comparative analysis.</title>
        <authorList>
            <person name="Ravi V."/>
            <person name="Khurana J.P."/>
            <person name="Tyagi A.K."/>
            <person name="Khurana P."/>
        </authorList>
    </citation>
    <scope>NUCLEOTIDE SEQUENCE [LARGE SCALE GENOMIC DNA]</scope>
    <source>
        <strain>cv. K2</strain>
    </source>
</reference>
<organism>
    <name type="scientific">Morus indica</name>
    <name type="common">Mulberry</name>
    <dbReference type="NCBI Taxonomy" id="248361"/>
    <lineage>
        <taxon>Eukaryota</taxon>
        <taxon>Viridiplantae</taxon>
        <taxon>Streptophyta</taxon>
        <taxon>Embryophyta</taxon>
        <taxon>Tracheophyta</taxon>
        <taxon>Spermatophyta</taxon>
        <taxon>Magnoliopsida</taxon>
        <taxon>eudicotyledons</taxon>
        <taxon>Gunneridae</taxon>
        <taxon>Pentapetalae</taxon>
        <taxon>rosids</taxon>
        <taxon>fabids</taxon>
        <taxon>Rosales</taxon>
        <taxon>Moraceae</taxon>
        <taxon>Moreae</taxon>
        <taxon>Morus</taxon>
    </lineage>
</organism>
<evidence type="ECO:0000250" key="1"/>
<evidence type="ECO:0000255" key="2">
    <source>
        <dbReference type="HAMAP-Rule" id="MF_00480"/>
    </source>
</evidence>
<evidence type="ECO:0000305" key="3"/>
<protein>
    <recommendedName>
        <fullName evidence="2">Small ribosomal subunit protein uS7cz/uS7cy</fullName>
    </recommendedName>
    <alternativeName>
        <fullName>30S ribosomal protein S7, chloroplastic</fullName>
    </alternativeName>
</protein>
<sequence length="155" mass="17403">MSRRGTAEEKTAKSDPIYRNRLVNMLVNRILKHGKKSLAYQIIYRAMKKIQQKTETNPLSVLRQAIRGVTPDIAVKARRVGGSTHQVPIEIGSTQGKALAIRWLLGASRKRPGRNMVFKLSSELVDAAKGSGDAIRKKEETHRMAEANRAFAHFR</sequence>
<keyword id="KW-0150">Chloroplast</keyword>
<keyword id="KW-0934">Plastid</keyword>
<keyword id="KW-0687">Ribonucleoprotein</keyword>
<keyword id="KW-0689">Ribosomal protein</keyword>
<keyword id="KW-0694">RNA-binding</keyword>
<keyword id="KW-0699">rRNA-binding</keyword>
<accession>Q09WV9</accession>
<proteinExistence type="inferred from homology"/>